<sequence>MKTLGEFIVEKQHEFSQATGELTALLSAIKLGAKIIHRDINKAGLVDILGASGAENVQGEVQQKLDLFANEKLKAALKARDIVAGIASEEEDEIVVFEGCEHAKYVVLMDPLDGSSNIDVNVSVGTIFSIYRRVTPVGTPVTEEDFLQPGNKQVAAGYVVYGSSTMLVYTTGCGVHAFTYDPSLGVFCLCQERMRFPEKGKTYSINEGNYIKFPNGVKKYIKFCQEEDSSTSRPYTSRYIGSLVADFHRNLLKGGIYLYPSTASHPQGKLRLLYECNPMAFLAEQAGGKASDGKERILDIIPESLHQRRSFFVGNRHMVDDVERFIREYPDA</sequence>
<organism>
    <name type="scientific">Salmonella agona (strain SL483)</name>
    <dbReference type="NCBI Taxonomy" id="454166"/>
    <lineage>
        <taxon>Bacteria</taxon>
        <taxon>Pseudomonadati</taxon>
        <taxon>Pseudomonadota</taxon>
        <taxon>Gammaproteobacteria</taxon>
        <taxon>Enterobacterales</taxon>
        <taxon>Enterobacteriaceae</taxon>
        <taxon>Salmonella</taxon>
    </lineage>
</organism>
<gene>
    <name evidence="1" type="primary">fbp</name>
    <name type="ordered locus">SeAg_B4695</name>
</gene>
<reference key="1">
    <citation type="journal article" date="2011" name="J. Bacteriol.">
        <title>Comparative genomics of 28 Salmonella enterica isolates: evidence for CRISPR-mediated adaptive sublineage evolution.</title>
        <authorList>
            <person name="Fricke W.F."/>
            <person name="Mammel M.K."/>
            <person name="McDermott P.F."/>
            <person name="Tartera C."/>
            <person name="White D.G."/>
            <person name="Leclerc J.E."/>
            <person name="Ravel J."/>
            <person name="Cebula T.A."/>
        </authorList>
    </citation>
    <scope>NUCLEOTIDE SEQUENCE [LARGE SCALE GENOMIC DNA]</scope>
    <source>
        <strain>SL483</strain>
    </source>
</reference>
<dbReference type="EC" id="3.1.3.11" evidence="1"/>
<dbReference type="EMBL" id="CP001138">
    <property type="protein sequence ID" value="ACH48607.1"/>
    <property type="molecule type" value="Genomic_DNA"/>
</dbReference>
<dbReference type="RefSeq" id="WP_000853764.1">
    <property type="nucleotide sequence ID" value="NC_011149.1"/>
</dbReference>
<dbReference type="SMR" id="B5F3E2"/>
<dbReference type="KEGG" id="sea:SeAg_B4695"/>
<dbReference type="HOGENOM" id="CLU_039977_2_2_6"/>
<dbReference type="UniPathway" id="UPA00138"/>
<dbReference type="Proteomes" id="UP000008819">
    <property type="component" value="Chromosome"/>
</dbReference>
<dbReference type="GO" id="GO:0005829">
    <property type="term" value="C:cytosol"/>
    <property type="evidence" value="ECO:0007669"/>
    <property type="project" value="TreeGrafter"/>
</dbReference>
<dbReference type="GO" id="GO:0042132">
    <property type="term" value="F:fructose 1,6-bisphosphate 1-phosphatase activity"/>
    <property type="evidence" value="ECO:0007669"/>
    <property type="project" value="UniProtKB-UniRule"/>
</dbReference>
<dbReference type="GO" id="GO:0000287">
    <property type="term" value="F:magnesium ion binding"/>
    <property type="evidence" value="ECO:0007669"/>
    <property type="project" value="UniProtKB-UniRule"/>
</dbReference>
<dbReference type="GO" id="GO:0030388">
    <property type="term" value="P:fructose 1,6-bisphosphate metabolic process"/>
    <property type="evidence" value="ECO:0007669"/>
    <property type="project" value="TreeGrafter"/>
</dbReference>
<dbReference type="GO" id="GO:0006002">
    <property type="term" value="P:fructose 6-phosphate metabolic process"/>
    <property type="evidence" value="ECO:0007669"/>
    <property type="project" value="TreeGrafter"/>
</dbReference>
<dbReference type="GO" id="GO:0006000">
    <property type="term" value="P:fructose metabolic process"/>
    <property type="evidence" value="ECO:0007669"/>
    <property type="project" value="TreeGrafter"/>
</dbReference>
<dbReference type="GO" id="GO:0006094">
    <property type="term" value="P:gluconeogenesis"/>
    <property type="evidence" value="ECO:0007669"/>
    <property type="project" value="UniProtKB-UniRule"/>
</dbReference>
<dbReference type="GO" id="GO:0005986">
    <property type="term" value="P:sucrose biosynthetic process"/>
    <property type="evidence" value="ECO:0007669"/>
    <property type="project" value="TreeGrafter"/>
</dbReference>
<dbReference type="CDD" id="cd00354">
    <property type="entry name" value="FBPase"/>
    <property type="match status" value="1"/>
</dbReference>
<dbReference type="FunFam" id="3.30.540.10:FF:000002">
    <property type="entry name" value="Fructose-1,6-bisphosphatase class 1"/>
    <property type="match status" value="1"/>
</dbReference>
<dbReference type="FunFam" id="3.40.190.80:FF:000001">
    <property type="entry name" value="Fructose-1,6-bisphosphatase class 1"/>
    <property type="match status" value="1"/>
</dbReference>
<dbReference type="Gene3D" id="3.40.190.80">
    <property type="match status" value="1"/>
</dbReference>
<dbReference type="Gene3D" id="3.30.540.10">
    <property type="entry name" value="Fructose-1,6-Bisphosphatase, subunit A, domain 1"/>
    <property type="match status" value="1"/>
</dbReference>
<dbReference type="HAMAP" id="MF_01855">
    <property type="entry name" value="FBPase_class1"/>
    <property type="match status" value="1"/>
</dbReference>
<dbReference type="InterPro" id="IPR044015">
    <property type="entry name" value="FBPase_C_dom"/>
</dbReference>
<dbReference type="InterPro" id="IPR000146">
    <property type="entry name" value="FBPase_class-1"/>
</dbReference>
<dbReference type="InterPro" id="IPR033391">
    <property type="entry name" value="FBPase_N"/>
</dbReference>
<dbReference type="InterPro" id="IPR028343">
    <property type="entry name" value="FBPtase"/>
</dbReference>
<dbReference type="InterPro" id="IPR020548">
    <property type="entry name" value="Fructose_bisphosphatase_AS"/>
</dbReference>
<dbReference type="NCBIfam" id="NF006778">
    <property type="entry name" value="PRK09293.1-1"/>
    <property type="match status" value="1"/>
</dbReference>
<dbReference type="NCBIfam" id="NF006779">
    <property type="entry name" value="PRK09293.1-3"/>
    <property type="match status" value="1"/>
</dbReference>
<dbReference type="PANTHER" id="PTHR11556">
    <property type="entry name" value="FRUCTOSE-1,6-BISPHOSPHATASE-RELATED"/>
    <property type="match status" value="1"/>
</dbReference>
<dbReference type="PANTHER" id="PTHR11556:SF35">
    <property type="entry name" value="SEDOHEPTULOSE-1,7-BISPHOSPHATASE, CHLOROPLASTIC"/>
    <property type="match status" value="1"/>
</dbReference>
<dbReference type="Pfam" id="PF00316">
    <property type="entry name" value="FBPase"/>
    <property type="match status" value="1"/>
</dbReference>
<dbReference type="Pfam" id="PF18913">
    <property type="entry name" value="FBPase_C"/>
    <property type="match status" value="1"/>
</dbReference>
<dbReference type="PIRSF" id="PIRSF500210">
    <property type="entry name" value="FBPtase"/>
    <property type="match status" value="1"/>
</dbReference>
<dbReference type="PIRSF" id="PIRSF000904">
    <property type="entry name" value="FBPtase_SBPase"/>
    <property type="match status" value="1"/>
</dbReference>
<dbReference type="PRINTS" id="PR00115">
    <property type="entry name" value="F16BPHPHTASE"/>
</dbReference>
<dbReference type="SUPFAM" id="SSF56655">
    <property type="entry name" value="Carbohydrate phosphatase"/>
    <property type="match status" value="1"/>
</dbReference>
<dbReference type="PROSITE" id="PS00124">
    <property type="entry name" value="FBPASE"/>
    <property type="match status" value="1"/>
</dbReference>
<evidence type="ECO:0000255" key="1">
    <source>
        <dbReference type="HAMAP-Rule" id="MF_01855"/>
    </source>
</evidence>
<feature type="chain" id="PRO_0000364684" description="Fructose-1,6-bisphosphatase class 1">
    <location>
        <begin position="1"/>
        <end position="332"/>
    </location>
</feature>
<feature type="binding site" evidence="1">
    <location>
        <position position="89"/>
    </location>
    <ligand>
        <name>Mg(2+)</name>
        <dbReference type="ChEBI" id="CHEBI:18420"/>
        <label>1</label>
    </ligand>
</feature>
<feature type="binding site" evidence="1">
    <location>
        <position position="110"/>
    </location>
    <ligand>
        <name>Mg(2+)</name>
        <dbReference type="ChEBI" id="CHEBI:18420"/>
        <label>1</label>
    </ligand>
</feature>
<feature type="binding site" evidence="1">
    <location>
        <position position="110"/>
    </location>
    <ligand>
        <name>Mg(2+)</name>
        <dbReference type="ChEBI" id="CHEBI:18420"/>
        <label>2</label>
    </ligand>
</feature>
<feature type="binding site" evidence="1">
    <location>
        <position position="112"/>
    </location>
    <ligand>
        <name>Mg(2+)</name>
        <dbReference type="ChEBI" id="CHEBI:18420"/>
        <label>1</label>
    </ligand>
</feature>
<feature type="binding site" evidence="1">
    <location>
        <begin position="113"/>
        <end position="116"/>
    </location>
    <ligand>
        <name>substrate</name>
    </ligand>
</feature>
<feature type="binding site" evidence="1">
    <location>
        <position position="113"/>
    </location>
    <ligand>
        <name>Mg(2+)</name>
        <dbReference type="ChEBI" id="CHEBI:18420"/>
        <label>2</label>
    </ligand>
</feature>
<feature type="binding site" evidence="1">
    <location>
        <position position="206"/>
    </location>
    <ligand>
        <name>substrate</name>
    </ligand>
</feature>
<feature type="binding site" evidence="1">
    <location>
        <position position="239"/>
    </location>
    <ligand>
        <name>substrate</name>
    </ligand>
</feature>
<feature type="binding site" evidence="1">
    <location>
        <begin position="257"/>
        <end position="259"/>
    </location>
    <ligand>
        <name>substrate</name>
    </ligand>
</feature>
<feature type="binding site" evidence="1">
    <location>
        <position position="269"/>
    </location>
    <ligand>
        <name>substrate</name>
    </ligand>
</feature>
<feature type="binding site" evidence="1">
    <location>
        <position position="275"/>
    </location>
    <ligand>
        <name>Mg(2+)</name>
        <dbReference type="ChEBI" id="CHEBI:18420"/>
        <label>2</label>
    </ligand>
</feature>
<protein>
    <recommendedName>
        <fullName evidence="1">Fructose-1,6-bisphosphatase class 1</fullName>
        <shortName evidence="1">FBPase class 1</shortName>
        <ecNumber evidence="1">3.1.3.11</ecNumber>
    </recommendedName>
    <alternativeName>
        <fullName evidence="1">D-fructose-1,6-bisphosphate 1-phosphohydrolase class 1</fullName>
    </alternativeName>
</protein>
<name>F16PA_SALA4</name>
<comment type="catalytic activity">
    <reaction evidence="1">
        <text>beta-D-fructose 1,6-bisphosphate + H2O = beta-D-fructose 6-phosphate + phosphate</text>
        <dbReference type="Rhea" id="RHEA:11064"/>
        <dbReference type="ChEBI" id="CHEBI:15377"/>
        <dbReference type="ChEBI" id="CHEBI:32966"/>
        <dbReference type="ChEBI" id="CHEBI:43474"/>
        <dbReference type="ChEBI" id="CHEBI:57634"/>
        <dbReference type="EC" id="3.1.3.11"/>
    </reaction>
</comment>
<comment type="cofactor">
    <cofactor evidence="1">
        <name>Mg(2+)</name>
        <dbReference type="ChEBI" id="CHEBI:18420"/>
    </cofactor>
    <text evidence="1">Binds 2 magnesium ions per subunit.</text>
</comment>
<comment type="pathway">
    <text evidence="1">Carbohydrate biosynthesis; gluconeogenesis.</text>
</comment>
<comment type="subunit">
    <text evidence="1">Homotetramer.</text>
</comment>
<comment type="subcellular location">
    <subcellularLocation>
        <location evidence="1">Cytoplasm</location>
    </subcellularLocation>
</comment>
<comment type="similarity">
    <text evidence="1">Belongs to the FBPase class 1 family.</text>
</comment>
<keyword id="KW-0119">Carbohydrate metabolism</keyword>
<keyword id="KW-0963">Cytoplasm</keyword>
<keyword id="KW-0378">Hydrolase</keyword>
<keyword id="KW-0460">Magnesium</keyword>
<keyword id="KW-0479">Metal-binding</keyword>
<proteinExistence type="inferred from homology"/>
<accession>B5F3E2</accession>